<dbReference type="EMBL" id="CP001600">
    <property type="protein sequence ID" value="ACR68899.1"/>
    <property type="molecule type" value="Genomic_DNA"/>
</dbReference>
<dbReference type="RefSeq" id="WP_015871050.1">
    <property type="nucleotide sequence ID" value="NZ_CP169062.1"/>
</dbReference>
<dbReference type="STRING" id="67780.B6E78_01765"/>
<dbReference type="KEGG" id="eic:NT01EI_1718"/>
<dbReference type="PATRIC" id="fig|634503.3.peg.1542"/>
<dbReference type="HOGENOM" id="CLU_133645_0_0_6"/>
<dbReference type="OrthoDB" id="2360740at2"/>
<dbReference type="Proteomes" id="UP000001485">
    <property type="component" value="Chromosome"/>
</dbReference>
<dbReference type="GO" id="GO:0005886">
    <property type="term" value="C:plasma membrane"/>
    <property type="evidence" value="ECO:0007669"/>
    <property type="project" value="UniProtKB-SubCell"/>
</dbReference>
<dbReference type="HAMAP" id="MF_01071">
    <property type="entry name" value="UPF0266"/>
    <property type="match status" value="1"/>
</dbReference>
<dbReference type="InterPro" id="IPR009328">
    <property type="entry name" value="DUF986"/>
</dbReference>
<dbReference type="NCBIfam" id="NF002791">
    <property type="entry name" value="PRK02913.1"/>
    <property type="match status" value="1"/>
</dbReference>
<dbReference type="Pfam" id="PF06173">
    <property type="entry name" value="DUF986"/>
    <property type="match status" value="1"/>
</dbReference>
<dbReference type="PIRSF" id="PIRSF020687">
    <property type="entry name" value="UCP020687"/>
    <property type="match status" value="1"/>
</dbReference>
<reference key="1">
    <citation type="submission" date="2009-03" db="EMBL/GenBank/DDBJ databases">
        <title>Complete genome sequence of Edwardsiella ictaluri 93-146.</title>
        <authorList>
            <person name="Williams M.L."/>
            <person name="Gillaspy A.F."/>
            <person name="Dyer D.W."/>
            <person name="Thune R.L."/>
            <person name="Waldbieser G.C."/>
            <person name="Schuster S.C."/>
            <person name="Gipson J."/>
            <person name="Zaitshik J."/>
            <person name="Landry C."/>
            <person name="Lawrence M.L."/>
        </authorList>
    </citation>
    <scope>NUCLEOTIDE SEQUENCE [LARGE SCALE GENOMIC DNA]</scope>
    <source>
        <strain>93-146</strain>
    </source>
</reference>
<protein>
    <recommendedName>
        <fullName evidence="1">UPF0266 membrane protein NT01EI_1718</fullName>
    </recommendedName>
</protein>
<name>Y1718_EDWI9</name>
<keyword id="KW-0997">Cell inner membrane</keyword>
<keyword id="KW-1003">Cell membrane</keyword>
<keyword id="KW-0472">Membrane</keyword>
<keyword id="KW-0812">Transmembrane</keyword>
<keyword id="KW-1133">Transmembrane helix</keyword>
<gene>
    <name type="ordered locus">NT01EI_1718</name>
</gene>
<feature type="chain" id="PRO_1000213474" description="UPF0266 membrane protein NT01EI_1718">
    <location>
        <begin position="1"/>
        <end position="156"/>
    </location>
</feature>
<feature type="transmembrane region" description="Helical" evidence="1">
    <location>
        <begin position="6"/>
        <end position="26"/>
    </location>
</feature>
<feature type="transmembrane region" description="Helical" evidence="1">
    <location>
        <begin position="46"/>
        <end position="63"/>
    </location>
</feature>
<feature type="transmembrane region" description="Helical" evidence="1">
    <location>
        <begin position="67"/>
        <end position="87"/>
    </location>
</feature>
<accession>C5BDX6</accession>
<comment type="subcellular location">
    <subcellularLocation>
        <location evidence="1">Cell inner membrane</location>
        <topology evidence="1">Multi-pass membrane protein</topology>
    </subcellularLocation>
</comment>
<comment type="similarity">
    <text evidence="1">Belongs to the UPF0266 family.</text>
</comment>
<organism>
    <name type="scientific">Edwardsiella ictaluri (strain 93-146)</name>
    <dbReference type="NCBI Taxonomy" id="634503"/>
    <lineage>
        <taxon>Bacteria</taxon>
        <taxon>Pseudomonadati</taxon>
        <taxon>Pseudomonadota</taxon>
        <taxon>Gammaproteobacteria</taxon>
        <taxon>Enterobacterales</taxon>
        <taxon>Hafniaceae</taxon>
        <taxon>Edwardsiella</taxon>
    </lineage>
</organism>
<evidence type="ECO:0000255" key="1">
    <source>
        <dbReference type="HAMAP-Rule" id="MF_01071"/>
    </source>
</evidence>
<proteinExistence type="inferred from homology"/>
<sequence>MSLTDIALLVFIVLFLLYAIYDEAIMPRQRSATLLRVNLKRRNKADSLIFIGLLAILVYRNISDQGAPFTTWLLATLMVVAIYIFYLRWPKLLFKQQGFYYGNVFIDYARIRGMNLSEDGFLVIDLEKRRLLIQVANLDSLDEIFKFLLEHQQKPA</sequence>